<evidence type="ECO:0000250" key="1"/>
<evidence type="ECO:0000255" key="2">
    <source>
        <dbReference type="PROSITE-ProRule" id="PRU10035"/>
    </source>
</evidence>
<evidence type="ECO:0000255" key="3">
    <source>
        <dbReference type="PROSITE-ProRule" id="PRU10036"/>
    </source>
</evidence>
<evidence type="ECO:0000305" key="4"/>
<accession>P31859</accession>
<proteinExistence type="evidence at protein level"/>
<feature type="chain" id="PRO_0000161720" description="Basic phospholipase A2">
    <location>
        <begin position="1"/>
        <end position="12" status="greater than"/>
    </location>
</feature>
<feature type="non-terminal residue">
    <location>
        <position position="12"/>
    </location>
</feature>
<sequence length="12" mass="1412">SLLEFGMMILEE</sequence>
<dbReference type="EC" id="3.1.1.4"/>
<dbReference type="GO" id="GO:0005576">
    <property type="term" value="C:extracellular region"/>
    <property type="evidence" value="ECO:0007669"/>
    <property type="project" value="UniProtKB-SubCell"/>
</dbReference>
<dbReference type="GO" id="GO:0004623">
    <property type="term" value="F:phospholipase A2 activity"/>
    <property type="evidence" value="ECO:0007669"/>
    <property type="project" value="UniProtKB-EC"/>
</dbReference>
<dbReference type="GO" id="GO:0016042">
    <property type="term" value="P:lipid catabolic process"/>
    <property type="evidence" value="ECO:0007669"/>
    <property type="project" value="UniProtKB-KW"/>
</dbReference>
<comment type="function">
    <text>PLA2 catalyzes the calcium-dependent hydrolysis of the 2-acyl groups in 3-sn-phosphoglycerides.</text>
</comment>
<comment type="catalytic activity">
    <reaction evidence="2 3">
        <text>a 1,2-diacyl-sn-glycero-3-phosphocholine + H2O = a 1-acyl-sn-glycero-3-phosphocholine + a fatty acid + H(+)</text>
        <dbReference type="Rhea" id="RHEA:15801"/>
        <dbReference type="ChEBI" id="CHEBI:15377"/>
        <dbReference type="ChEBI" id="CHEBI:15378"/>
        <dbReference type="ChEBI" id="CHEBI:28868"/>
        <dbReference type="ChEBI" id="CHEBI:57643"/>
        <dbReference type="ChEBI" id="CHEBI:58168"/>
        <dbReference type="EC" id="3.1.1.4"/>
    </reaction>
</comment>
<comment type="cofactor">
    <cofactor evidence="1">
        <name>Ca(2+)</name>
        <dbReference type="ChEBI" id="CHEBI:29108"/>
    </cofactor>
    <text evidence="1">Binds 1 Ca(2+) ion.</text>
</comment>
<comment type="subcellular location">
    <subcellularLocation>
        <location>Secreted</location>
    </subcellularLocation>
</comment>
<comment type="tissue specificity">
    <text>Expressed by the venom gland.</text>
</comment>
<comment type="similarity">
    <text evidence="4">Belongs to the phospholipase A2 family. Group II subfamily.</text>
</comment>
<reference key="1">
    <citation type="journal article" date="1973" name="Biochimie">
        <title>Purification and physiochemical, chemical and biological properties of a toxic A2 phospholipase isolated from the venom of viperidae snakes: Vipera berus.</title>
        <authorList>
            <person name="Delori P.J."/>
        </authorList>
    </citation>
    <scope>PROTEIN SEQUENCE</scope>
    <source>
        <tissue>Venom</tissue>
    </source>
</reference>
<protein>
    <recommendedName>
        <fullName>Basic phospholipase A2</fullName>
        <shortName>svPLA2</shortName>
        <ecNumber>3.1.1.4</ecNumber>
    </recommendedName>
    <alternativeName>
        <fullName>Phosphatidylcholine 2-acylhydrolase</fullName>
    </alternativeName>
</protein>
<name>PA2B_VIPBE</name>
<organism>
    <name type="scientific">Vipera berus</name>
    <name type="common">Common European adder</name>
    <name type="synonym">Coluber berus</name>
    <dbReference type="NCBI Taxonomy" id="31155"/>
    <lineage>
        <taxon>Eukaryota</taxon>
        <taxon>Metazoa</taxon>
        <taxon>Chordata</taxon>
        <taxon>Craniata</taxon>
        <taxon>Vertebrata</taxon>
        <taxon>Euteleostomi</taxon>
        <taxon>Lepidosauria</taxon>
        <taxon>Squamata</taxon>
        <taxon>Bifurcata</taxon>
        <taxon>Unidentata</taxon>
        <taxon>Episquamata</taxon>
        <taxon>Toxicofera</taxon>
        <taxon>Serpentes</taxon>
        <taxon>Colubroidea</taxon>
        <taxon>Viperidae</taxon>
        <taxon>Viperinae</taxon>
        <taxon>Vipera</taxon>
    </lineage>
</organism>
<keyword id="KW-0106">Calcium</keyword>
<keyword id="KW-0903">Direct protein sequencing</keyword>
<keyword id="KW-0378">Hydrolase</keyword>
<keyword id="KW-0442">Lipid degradation</keyword>
<keyword id="KW-0443">Lipid metabolism</keyword>
<keyword id="KW-0964">Secreted</keyword>